<reference key="1">
    <citation type="journal article" date="2006" name="Appl. Environ. Microbiol.">
        <title>Genome sequence of the chemolithoautotrophic nitrite-oxidizing bacterium Nitrobacter winogradskyi Nb-255.</title>
        <authorList>
            <person name="Starkenburg S.R."/>
            <person name="Chain P.S.G."/>
            <person name="Sayavedra-Soto L.A."/>
            <person name="Hauser L."/>
            <person name="Land M.L."/>
            <person name="Larimer F.W."/>
            <person name="Malfatti S.A."/>
            <person name="Klotz M.G."/>
            <person name="Bottomley P.J."/>
            <person name="Arp D.J."/>
            <person name="Hickey W.J."/>
        </authorList>
    </citation>
    <scope>NUCLEOTIDE SEQUENCE [LARGE SCALE GENOMIC DNA]</scope>
    <source>
        <strain>ATCC 25391 / DSM 10237 / CIP 104748 / NCIMB 11846 / Nb-255</strain>
    </source>
</reference>
<evidence type="ECO:0000255" key="1">
    <source>
        <dbReference type="HAMAP-Rule" id="MF_00921"/>
    </source>
</evidence>
<keyword id="KW-0418">Kinase</keyword>
<keyword id="KW-0547">Nucleotide-binding</keyword>
<keyword id="KW-1185">Reference proteome</keyword>
<keyword id="KW-0723">Serine/threonine-protein kinase</keyword>
<keyword id="KW-0808">Transferase</keyword>
<organism>
    <name type="scientific">Nitrobacter winogradskyi (strain ATCC 25391 / DSM 10237 / CIP 104748 / NCIMB 11846 / Nb-255)</name>
    <dbReference type="NCBI Taxonomy" id="323098"/>
    <lineage>
        <taxon>Bacteria</taxon>
        <taxon>Pseudomonadati</taxon>
        <taxon>Pseudomonadota</taxon>
        <taxon>Alphaproteobacteria</taxon>
        <taxon>Hyphomicrobiales</taxon>
        <taxon>Nitrobacteraceae</taxon>
        <taxon>Nitrobacter</taxon>
    </lineage>
</organism>
<dbReference type="EC" id="2.7.11.32" evidence="1"/>
<dbReference type="EC" id="2.7.4.27" evidence="1"/>
<dbReference type="EMBL" id="CP000115">
    <property type="protein sequence ID" value="ABA03370.1"/>
    <property type="molecule type" value="Genomic_DNA"/>
</dbReference>
<dbReference type="RefSeq" id="WP_011313439.1">
    <property type="nucleotide sequence ID" value="NC_007406.1"/>
</dbReference>
<dbReference type="SMR" id="Q3SWH1"/>
<dbReference type="STRING" id="323098.Nwi_0102"/>
<dbReference type="KEGG" id="nwi:Nwi_0102"/>
<dbReference type="eggNOG" id="COG1806">
    <property type="taxonomic scope" value="Bacteria"/>
</dbReference>
<dbReference type="HOGENOM" id="CLU_046206_2_0_5"/>
<dbReference type="OrthoDB" id="9782201at2"/>
<dbReference type="Proteomes" id="UP000002531">
    <property type="component" value="Chromosome"/>
</dbReference>
<dbReference type="GO" id="GO:0043531">
    <property type="term" value="F:ADP binding"/>
    <property type="evidence" value="ECO:0007669"/>
    <property type="project" value="UniProtKB-UniRule"/>
</dbReference>
<dbReference type="GO" id="GO:0005524">
    <property type="term" value="F:ATP binding"/>
    <property type="evidence" value="ECO:0007669"/>
    <property type="project" value="InterPro"/>
</dbReference>
<dbReference type="GO" id="GO:0016776">
    <property type="term" value="F:phosphotransferase activity, phosphate group as acceptor"/>
    <property type="evidence" value="ECO:0007669"/>
    <property type="project" value="UniProtKB-UniRule"/>
</dbReference>
<dbReference type="GO" id="GO:0004674">
    <property type="term" value="F:protein serine/threonine kinase activity"/>
    <property type="evidence" value="ECO:0007669"/>
    <property type="project" value="UniProtKB-UniRule"/>
</dbReference>
<dbReference type="HAMAP" id="MF_00921">
    <property type="entry name" value="PDRP"/>
    <property type="match status" value="1"/>
</dbReference>
<dbReference type="InterPro" id="IPR005177">
    <property type="entry name" value="Kinase-pyrophosphorylase"/>
</dbReference>
<dbReference type="InterPro" id="IPR026565">
    <property type="entry name" value="PPDK_reg"/>
</dbReference>
<dbReference type="NCBIfam" id="NF003742">
    <property type="entry name" value="PRK05339.1"/>
    <property type="match status" value="1"/>
</dbReference>
<dbReference type="PANTHER" id="PTHR31756">
    <property type="entry name" value="PYRUVATE, PHOSPHATE DIKINASE REGULATORY PROTEIN 1, CHLOROPLASTIC"/>
    <property type="match status" value="1"/>
</dbReference>
<dbReference type="PANTHER" id="PTHR31756:SF3">
    <property type="entry name" value="PYRUVATE, PHOSPHATE DIKINASE REGULATORY PROTEIN 1, CHLOROPLASTIC"/>
    <property type="match status" value="1"/>
</dbReference>
<dbReference type="Pfam" id="PF03618">
    <property type="entry name" value="Kinase-PPPase"/>
    <property type="match status" value="1"/>
</dbReference>
<name>PDRP_NITWN</name>
<feature type="chain" id="PRO_0000196680" description="Putative pyruvate, phosphate dikinase regulatory protein">
    <location>
        <begin position="1"/>
        <end position="280"/>
    </location>
</feature>
<feature type="binding site" evidence="1">
    <location>
        <begin position="154"/>
        <end position="161"/>
    </location>
    <ligand>
        <name>ADP</name>
        <dbReference type="ChEBI" id="CHEBI:456216"/>
    </ligand>
</feature>
<comment type="function">
    <text evidence="1">Bifunctional serine/threonine kinase and phosphorylase involved in the regulation of the pyruvate, phosphate dikinase (PPDK) by catalyzing its phosphorylation/dephosphorylation.</text>
</comment>
<comment type="catalytic activity">
    <reaction evidence="1">
        <text>N(tele)-phospho-L-histidyl/L-threonyl-[pyruvate, phosphate dikinase] + ADP = N(tele)-phospho-L-histidyl/O-phospho-L-threonyl-[pyruvate, phosphate dikinase] + AMP + H(+)</text>
        <dbReference type="Rhea" id="RHEA:43692"/>
        <dbReference type="Rhea" id="RHEA-COMP:10650"/>
        <dbReference type="Rhea" id="RHEA-COMP:10651"/>
        <dbReference type="ChEBI" id="CHEBI:15378"/>
        <dbReference type="ChEBI" id="CHEBI:30013"/>
        <dbReference type="ChEBI" id="CHEBI:61977"/>
        <dbReference type="ChEBI" id="CHEBI:83586"/>
        <dbReference type="ChEBI" id="CHEBI:456215"/>
        <dbReference type="ChEBI" id="CHEBI:456216"/>
        <dbReference type="EC" id="2.7.11.32"/>
    </reaction>
</comment>
<comment type="catalytic activity">
    <reaction evidence="1">
        <text>N(tele)-phospho-L-histidyl/O-phospho-L-threonyl-[pyruvate, phosphate dikinase] + phosphate + H(+) = N(tele)-phospho-L-histidyl/L-threonyl-[pyruvate, phosphate dikinase] + diphosphate</text>
        <dbReference type="Rhea" id="RHEA:43696"/>
        <dbReference type="Rhea" id="RHEA-COMP:10650"/>
        <dbReference type="Rhea" id="RHEA-COMP:10651"/>
        <dbReference type="ChEBI" id="CHEBI:15378"/>
        <dbReference type="ChEBI" id="CHEBI:30013"/>
        <dbReference type="ChEBI" id="CHEBI:33019"/>
        <dbReference type="ChEBI" id="CHEBI:43474"/>
        <dbReference type="ChEBI" id="CHEBI:61977"/>
        <dbReference type="ChEBI" id="CHEBI:83586"/>
        <dbReference type="EC" id="2.7.4.27"/>
    </reaction>
</comment>
<comment type="similarity">
    <text evidence="1">Belongs to the pyruvate, phosphate/water dikinase regulatory protein family. PDRP subfamily.</text>
</comment>
<proteinExistence type="inferred from homology"/>
<protein>
    <recommendedName>
        <fullName evidence="1">Putative pyruvate, phosphate dikinase regulatory protein</fullName>
        <shortName evidence="1">PPDK regulatory protein</shortName>
        <ecNumber evidence="1">2.7.11.32</ecNumber>
        <ecNumber evidence="1">2.7.4.27</ecNumber>
    </recommendedName>
</protein>
<sequence>MAPGTGRDFHLHLVSDSTGETLITVSRAVTAQYAGVTPIEHVYPLVRSEKQLDRVLAEIEEAPGIVLFTLLEKDVAVRLEARCQEINCPSLSIIGPVMQLFQAYLGADTTGRVGAQHTLNADYFKRIDALNYTMMHDDGQHVESLEEADVVLVGVSRTSKTPTSVYLANRGTRTANVPLVPGIAIPRQLETLKNPLVVSLHAAPERLIQVRQNRLLSIGAGPGNEAYIDRQSVTEEVIHARRLSVKHDWAQLDVTRRSIEETAAAIMKLFADRRRQRRPD</sequence>
<accession>Q3SWH1</accession>
<gene>
    <name type="ordered locus">Nwi_0102</name>
</gene>